<reference key="1">
    <citation type="submission" date="2006-01" db="EMBL/GenBank/DDBJ databases">
        <title>Complete sequence of Anaeromyxobacter dehalogenans 2CP-C.</title>
        <authorList>
            <person name="Copeland A."/>
            <person name="Lucas S."/>
            <person name="Lapidus A."/>
            <person name="Barry K."/>
            <person name="Detter J.C."/>
            <person name="Glavina T."/>
            <person name="Hammon N."/>
            <person name="Israni S."/>
            <person name="Pitluck S."/>
            <person name="Brettin T."/>
            <person name="Bruce D."/>
            <person name="Han C."/>
            <person name="Tapia R."/>
            <person name="Gilna P."/>
            <person name="Kiss H."/>
            <person name="Schmutz J."/>
            <person name="Larimer F."/>
            <person name="Land M."/>
            <person name="Kyrpides N."/>
            <person name="Anderson I."/>
            <person name="Sanford R.A."/>
            <person name="Ritalahti K.M."/>
            <person name="Thomas H.S."/>
            <person name="Kirby J.R."/>
            <person name="Zhulin I.B."/>
            <person name="Loeffler F.E."/>
            <person name="Richardson P."/>
        </authorList>
    </citation>
    <scope>NUCLEOTIDE SEQUENCE [LARGE SCALE GENOMIC DNA]</scope>
    <source>
        <strain>2CP-C</strain>
    </source>
</reference>
<gene>
    <name evidence="1" type="primary">rplF</name>
    <name type="ordered locus">Adeh_1931</name>
</gene>
<dbReference type="EMBL" id="CP000251">
    <property type="protein sequence ID" value="ABC81702.1"/>
    <property type="molecule type" value="Genomic_DNA"/>
</dbReference>
<dbReference type="RefSeq" id="WP_011420985.1">
    <property type="nucleotide sequence ID" value="NC_007760.1"/>
</dbReference>
<dbReference type="SMR" id="Q2IJ73"/>
<dbReference type="STRING" id="290397.Adeh_1931"/>
<dbReference type="KEGG" id="ade:Adeh_1931"/>
<dbReference type="eggNOG" id="COG0097">
    <property type="taxonomic scope" value="Bacteria"/>
</dbReference>
<dbReference type="HOGENOM" id="CLU_065464_1_2_7"/>
<dbReference type="OrthoDB" id="9805007at2"/>
<dbReference type="Proteomes" id="UP000001935">
    <property type="component" value="Chromosome"/>
</dbReference>
<dbReference type="GO" id="GO:0022625">
    <property type="term" value="C:cytosolic large ribosomal subunit"/>
    <property type="evidence" value="ECO:0007669"/>
    <property type="project" value="TreeGrafter"/>
</dbReference>
<dbReference type="GO" id="GO:0019843">
    <property type="term" value="F:rRNA binding"/>
    <property type="evidence" value="ECO:0007669"/>
    <property type="project" value="UniProtKB-UniRule"/>
</dbReference>
<dbReference type="GO" id="GO:0003735">
    <property type="term" value="F:structural constituent of ribosome"/>
    <property type="evidence" value="ECO:0007669"/>
    <property type="project" value="InterPro"/>
</dbReference>
<dbReference type="GO" id="GO:0002181">
    <property type="term" value="P:cytoplasmic translation"/>
    <property type="evidence" value="ECO:0007669"/>
    <property type="project" value="TreeGrafter"/>
</dbReference>
<dbReference type="FunFam" id="3.90.930.12:FF:000001">
    <property type="entry name" value="50S ribosomal protein L6"/>
    <property type="match status" value="1"/>
</dbReference>
<dbReference type="FunFam" id="3.90.930.12:FF:000002">
    <property type="entry name" value="50S ribosomal protein L6"/>
    <property type="match status" value="1"/>
</dbReference>
<dbReference type="Gene3D" id="3.90.930.12">
    <property type="entry name" value="Ribosomal protein L6, alpha-beta domain"/>
    <property type="match status" value="2"/>
</dbReference>
<dbReference type="HAMAP" id="MF_01365_B">
    <property type="entry name" value="Ribosomal_uL6_B"/>
    <property type="match status" value="1"/>
</dbReference>
<dbReference type="InterPro" id="IPR000702">
    <property type="entry name" value="Ribosomal_uL6-like"/>
</dbReference>
<dbReference type="InterPro" id="IPR036789">
    <property type="entry name" value="Ribosomal_uL6-like_a/b-dom_sf"/>
</dbReference>
<dbReference type="InterPro" id="IPR020040">
    <property type="entry name" value="Ribosomal_uL6_a/b-dom"/>
</dbReference>
<dbReference type="InterPro" id="IPR019906">
    <property type="entry name" value="Ribosomal_uL6_bac-type"/>
</dbReference>
<dbReference type="InterPro" id="IPR002358">
    <property type="entry name" value="Ribosomal_uL6_CS"/>
</dbReference>
<dbReference type="NCBIfam" id="TIGR03654">
    <property type="entry name" value="L6_bact"/>
    <property type="match status" value="1"/>
</dbReference>
<dbReference type="PANTHER" id="PTHR11655">
    <property type="entry name" value="60S/50S RIBOSOMAL PROTEIN L6/L9"/>
    <property type="match status" value="1"/>
</dbReference>
<dbReference type="PANTHER" id="PTHR11655:SF14">
    <property type="entry name" value="LARGE RIBOSOMAL SUBUNIT PROTEIN UL6M"/>
    <property type="match status" value="1"/>
</dbReference>
<dbReference type="Pfam" id="PF00347">
    <property type="entry name" value="Ribosomal_L6"/>
    <property type="match status" value="2"/>
</dbReference>
<dbReference type="PIRSF" id="PIRSF002162">
    <property type="entry name" value="Ribosomal_L6"/>
    <property type="match status" value="1"/>
</dbReference>
<dbReference type="PRINTS" id="PR00059">
    <property type="entry name" value="RIBOSOMALL6"/>
</dbReference>
<dbReference type="SUPFAM" id="SSF56053">
    <property type="entry name" value="Ribosomal protein L6"/>
    <property type="match status" value="2"/>
</dbReference>
<dbReference type="PROSITE" id="PS00525">
    <property type="entry name" value="RIBOSOMAL_L6_1"/>
    <property type="match status" value="1"/>
</dbReference>
<keyword id="KW-1185">Reference proteome</keyword>
<keyword id="KW-0687">Ribonucleoprotein</keyword>
<keyword id="KW-0689">Ribosomal protein</keyword>
<keyword id="KW-0694">RNA-binding</keyword>
<keyword id="KW-0699">rRNA-binding</keyword>
<feature type="chain" id="PRO_0000265211" description="Large ribosomal subunit protein uL6">
    <location>
        <begin position="1"/>
        <end position="180"/>
    </location>
</feature>
<sequence>MSRVGKMPVKIPEKVKVSVDGNVVKVEGPKGKMHFPTNPLVSVQVDKGEVKVARQDESHVAKGLHGLTRTLVKNALEGVVKGYEKGLEINGVGFKAEVKGKEIHFTLGFSHPVVFKLPEGVTAEVDAKQTKLTIRSVDKHLLGLTAAKVRDLRPPEPYKGKGIKYADETIRRKEGKTGAA</sequence>
<name>RL6_ANADE</name>
<comment type="function">
    <text evidence="1">This protein binds to the 23S rRNA, and is important in its secondary structure. It is located near the subunit interface in the base of the L7/L12 stalk, and near the tRNA binding site of the peptidyltransferase center.</text>
</comment>
<comment type="subunit">
    <text evidence="1">Part of the 50S ribosomal subunit.</text>
</comment>
<comment type="similarity">
    <text evidence="1">Belongs to the universal ribosomal protein uL6 family.</text>
</comment>
<protein>
    <recommendedName>
        <fullName evidence="1">Large ribosomal subunit protein uL6</fullName>
    </recommendedName>
    <alternativeName>
        <fullName evidence="2">50S ribosomal protein L6</fullName>
    </alternativeName>
</protein>
<proteinExistence type="inferred from homology"/>
<evidence type="ECO:0000255" key="1">
    <source>
        <dbReference type="HAMAP-Rule" id="MF_01365"/>
    </source>
</evidence>
<evidence type="ECO:0000305" key="2"/>
<organism>
    <name type="scientific">Anaeromyxobacter dehalogenans (strain 2CP-C)</name>
    <dbReference type="NCBI Taxonomy" id="290397"/>
    <lineage>
        <taxon>Bacteria</taxon>
        <taxon>Pseudomonadati</taxon>
        <taxon>Myxococcota</taxon>
        <taxon>Myxococcia</taxon>
        <taxon>Myxococcales</taxon>
        <taxon>Cystobacterineae</taxon>
        <taxon>Anaeromyxobacteraceae</taxon>
        <taxon>Anaeromyxobacter</taxon>
    </lineage>
</organism>
<accession>Q2IJ73</accession>